<reference key="1">
    <citation type="journal article" date="1999" name="Nature">
        <title>Sequence and analysis of chromosome 2 of the plant Arabidopsis thaliana.</title>
        <authorList>
            <person name="Lin X."/>
            <person name="Kaul S."/>
            <person name="Rounsley S.D."/>
            <person name="Shea T.P."/>
            <person name="Benito M.-I."/>
            <person name="Town C.D."/>
            <person name="Fujii C.Y."/>
            <person name="Mason T.M."/>
            <person name="Bowman C.L."/>
            <person name="Barnstead M.E."/>
            <person name="Feldblyum T.V."/>
            <person name="Buell C.R."/>
            <person name="Ketchum K.A."/>
            <person name="Lee J.J."/>
            <person name="Ronning C.M."/>
            <person name="Koo H.L."/>
            <person name="Moffat K.S."/>
            <person name="Cronin L.A."/>
            <person name="Shen M."/>
            <person name="Pai G."/>
            <person name="Van Aken S."/>
            <person name="Umayam L."/>
            <person name="Tallon L.J."/>
            <person name="Gill J.E."/>
            <person name="Adams M.D."/>
            <person name="Carrera A.J."/>
            <person name="Creasy T.H."/>
            <person name="Goodman H.M."/>
            <person name="Somerville C.R."/>
            <person name="Copenhaver G.P."/>
            <person name="Preuss D."/>
            <person name="Nierman W.C."/>
            <person name="White O."/>
            <person name="Eisen J.A."/>
            <person name="Salzberg S.L."/>
            <person name="Fraser C.M."/>
            <person name="Venter J.C."/>
        </authorList>
    </citation>
    <scope>NUCLEOTIDE SEQUENCE [LARGE SCALE GENOMIC DNA]</scope>
    <source>
        <strain>cv. Columbia</strain>
    </source>
</reference>
<reference key="2">
    <citation type="journal article" date="2017" name="Plant J.">
        <title>Araport11: a complete reannotation of the Arabidopsis thaliana reference genome.</title>
        <authorList>
            <person name="Cheng C.Y."/>
            <person name="Krishnakumar V."/>
            <person name="Chan A.P."/>
            <person name="Thibaud-Nissen F."/>
            <person name="Schobel S."/>
            <person name="Town C.D."/>
        </authorList>
    </citation>
    <scope>GENOME REANNOTATION</scope>
    <source>
        <strain>cv. Columbia</strain>
    </source>
</reference>
<reference key="3">
    <citation type="submission" date="2005-03" db="EMBL/GenBank/DDBJ databases">
        <title>Large-scale analysis of RIKEN Arabidopsis full-length (RAFL) cDNAs.</title>
        <authorList>
            <person name="Totoki Y."/>
            <person name="Seki M."/>
            <person name="Ishida J."/>
            <person name="Nakajima M."/>
            <person name="Enju A."/>
            <person name="Kamiya A."/>
            <person name="Narusaka M."/>
            <person name="Shin-i T."/>
            <person name="Nakagawa M."/>
            <person name="Sakamoto N."/>
            <person name="Oishi K."/>
            <person name="Kohara Y."/>
            <person name="Kobayashi M."/>
            <person name="Toyoda A."/>
            <person name="Sakaki Y."/>
            <person name="Sakurai T."/>
            <person name="Iida K."/>
            <person name="Akiyama K."/>
            <person name="Satou M."/>
            <person name="Toyoda T."/>
            <person name="Konagaya A."/>
            <person name="Carninci P."/>
            <person name="Kawai J."/>
            <person name="Hayashizaki Y."/>
            <person name="Shinozaki K."/>
        </authorList>
    </citation>
    <scope>NUCLEOTIDE SEQUENCE [LARGE SCALE MRNA]</scope>
    <source>
        <strain>cv. Columbia</strain>
    </source>
</reference>
<reference key="4">
    <citation type="journal article" date="2005" name="Plant J.">
        <title>Requirement of aminoacyl-tRNA synthetases for gametogenesis and embryo development in Arabidopsis.</title>
        <authorList>
            <person name="Berg M."/>
            <person name="Rogers R."/>
            <person name="Muralla R."/>
            <person name="Meinke D."/>
        </authorList>
    </citation>
    <scope>DISRUPTION PHENOTYPE</scope>
</reference>
<reference key="5">
    <citation type="journal article" date="2005" name="Proc. Natl. Acad. Sci. U.S.A.">
        <title>Dual targeting is the rule for organellar aminoacyl-tRNA synthetases in Arabidopsis thaliana.</title>
        <authorList>
            <person name="Duchene A.-M."/>
            <person name="Giritch A."/>
            <person name="Hoffmann B."/>
            <person name="Cognat V."/>
            <person name="Lancelin D."/>
            <person name="Peeters N.M."/>
            <person name="Zaepfel M."/>
            <person name="Marechal-Drouard L."/>
            <person name="Small I.D."/>
        </authorList>
    </citation>
    <scope>SUBCELLULAR LOCATION</scope>
</reference>
<accession>F4IFC5</accession>
<accession>Q56XW1</accession>
<proteinExistence type="evidence at transcript level"/>
<protein>
    <recommendedName>
        <fullName evidence="4">Threonine--tRNA ligase, chloroplastic/mitochondrial 2</fullName>
        <ecNumber evidence="4">6.1.1.3</ecNumber>
    </recommendedName>
    <alternativeName>
        <fullName evidence="3">Protein EMBRYO DEFECTIVE 2761</fullName>
    </alternativeName>
    <alternativeName>
        <fullName evidence="4">Threonyl-tRNA synthetase</fullName>
        <shortName evidence="4">ThrRS</shortName>
    </alternativeName>
</protein>
<sequence>MASSHSLLFSSSFLSKPSSFTSSLRRFVYLPTRQFWPRQRHGFSTVFAVATEPAISSSGPKKAEPSTVVLPSNESSDKLLKIRHTCAHVMAMAVQKLFPDAKVTIGPWIDNGFYYDFDMEPLTDKDLKRIKKEMDRIISRNLPLLREEVSREEAKKRIMAINEPYKMEILDGIKEEPITVYHIGNEWWDLCAGPHVETTGKINKKAVELESVAGAYWRGDEKRQMLQRIYGTAWESEEQLKAYLHFKEEAKRRDHRRIGQDLDLFSIQDEAGGGLVFWHPKGAIVRNIIEESWKKMHVEHGYDLIYTPHVAKADLWKISGHLDFYRENMYDQMEIEDELYQLRPMNCPYHILLYQRKRQSYRDLPIRVAELGTVYRYELSGSLHGLFRVRGFTQDDAHIFCLEDQIKDEIRGVLDLTEEILSRFGFNKYEVNLSTRPEKSVGGDDIWEKATCALRDALDDKGWSYEVDEGGGAFYGPKIDLKIEDALGRKWQCSTIQVDFNLPQRFDITYVDTNSDKKRPIMIHRAVLGSLERFFGVLIEHYAGDFPLWLSPVQVRVLPVTDNQLEFCKEVSKKLRACGVRAELCHGERLPKLIRNAETQKIPLMAVVGPKEVETGTVTVRSRFGGELGTIPVDDLINKINIAVETRTAL</sequence>
<organism>
    <name type="scientific">Arabidopsis thaliana</name>
    <name type="common">Mouse-ear cress</name>
    <dbReference type="NCBI Taxonomy" id="3702"/>
    <lineage>
        <taxon>Eukaryota</taxon>
        <taxon>Viridiplantae</taxon>
        <taxon>Streptophyta</taxon>
        <taxon>Embryophyta</taxon>
        <taxon>Tracheophyta</taxon>
        <taxon>Spermatophyta</taxon>
        <taxon>Magnoliopsida</taxon>
        <taxon>eudicotyledons</taxon>
        <taxon>Gunneridae</taxon>
        <taxon>Pentapetalae</taxon>
        <taxon>rosids</taxon>
        <taxon>malvids</taxon>
        <taxon>Brassicales</taxon>
        <taxon>Brassicaceae</taxon>
        <taxon>Camelineae</taxon>
        <taxon>Arabidopsis</taxon>
    </lineage>
</organism>
<name>SYTM2_ARATH</name>
<keyword id="KW-0030">Aminoacyl-tRNA synthetase</keyword>
<keyword id="KW-0067">ATP-binding</keyword>
<keyword id="KW-0150">Chloroplast</keyword>
<keyword id="KW-0436">Ligase</keyword>
<keyword id="KW-0479">Metal-binding</keyword>
<keyword id="KW-0496">Mitochondrion</keyword>
<keyword id="KW-0547">Nucleotide-binding</keyword>
<keyword id="KW-0934">Plastid</keyword>
<keyword id="KW-0648">Protein biosynthesis</keyword>
<keyword id="KW-1185">Reference proteome</keyword>
<keyword id="KW-0809">Transit peptide</keyword>
<keyword id="KW-0862">Zinc</keyword>
<dbReference type="EC" id="6.1.1.3" evidence="4"/>
<dbReference type="EMBL" id="AC006955">
    <property type="status" value="NOT_ANNOTATED_CDS"/>
    <property type="molecule type" value="Genomic_DNA"/>
</dbReference>
<dbReference type="EMBL" id="CP002685">
    <property type="protein sequence ID" value="AEC05873.1"/>
    <property type="molecule type" value="Genomic_DNA"/>
</dbReference>
<dbReference type="EMBL" id="CP002685">
    <property type="protein sequence ID" value="ANM63276.1"/>
    <property type="molecule type" value="Genomic_DNA"/>
</dbReference>
<dbReference type="EMBL" id="AK221562">
    <property type="protein sequence ID" value="BAD94986.1"/>
    <property type="status" value="ALT_FRAME"/>
    <property type="molecule type" value="mRNA"/>
</dbReference>
<dbReference type="RefSeq" id="NP_001318198.1">
    <property type="nucleotide sequence ID" value="NM_001335263.1"/>
</dbReference>
<dbReference type="RefSeq" id="NP_671778.1">
    <property type="nucleotide sequence ID" value="NM_147245.2"/>
</dbReference>
<dbReference type="BMRB" id="F4IFC5"/>
<dbReference type="SMR" id="F4IFC5"/>
<dbReference type="FunCoup" id="F4IFC5">
    <property type="interactions" value="1119"/>
</dbReference>
<dbReference type="IntAct" id="F4IFC5">
    <property type="interactions" value="2"/>
</dbReference>
<dbReference type="MINT" id="F4IFC5"/>
<dbReference type="STRING" id="3702.F4IFC5"/>
<dbReference type="PaxDb" id="3702-AT2G04842.1"/>
<dbReference type="ProteomicsDB" id="233023"/>
<dbReference type="EnsemblPlants" id="AT2G04842.1">
    <property type="protein sequence ID" value="AT2G04842.1"/>
    <property type="gene ID" value="AT2G04842"/>
</dbReference>
<dbReference type="EnsemblPlants" id="AT2G04842.2">
    <property type="protein sequence ID" value="AT2G04842.2"/>
    <property type="gene ID" value="AT2G04842"/>
</dbReference>
<dbReference type="GeneID" id="815029"/>
<dbReference type="Gramene" id="AT2G04842.1">
    <property type="protein sequence ID" value="AT2G04842.1"/>
    <property type="gene ID" value="AT2G04842"/>
</dbReference>
<dbReference type="Gramene" id="AT2G04842.2">
    <property type="protein sequence ID" value="AT2G04842.2"/>
    <property type="gene ID" value="AT2G04842"/>
</dbReference>
<dbReference type="KEGG" id="ath:AT2G04842"/>
<dbReference type="Araport" id="AT2G04842"/>
<dbReference type="TAIR" id="AT2G04842">
    <property type="gene designation" value="EMB2761"/>
</dbReference>
<dbReference type="eggNOG" id="KOG1637">
    <property type="taxonomic scope" value="Eukaryota"/>
</dbReference>
<dbReference type="HOGENOM" id="CLU_008554_0_1_1"/>
<dbReference type="InParanoid" id="F4IFC5"/>
<dbReference type="OMA" id="EDKGWEY"/>
<dbReference type="BRENDA" id="6.1.1.3">
    <property type="organism ID" value="399"/>
</dbReference>
<dbReference type="PRO" id="PR:F4IFC5"/>
<dbReference type="Proteomes" id="UP000006548">
    <property type="component" value="Chromosome 2"/>
</dbReference>
<dbReference type="ExpressionAtlas" id="F4IFC5">
    <property type="expression patterns" value="baseline and differential"/>
</dbReference>
<dbReference type="GO" id="GO:0009507">
    <property type="term" value="C:chloroplast"/>
    <property type="evidence" value="ECO:0000314"/>
    <property type="project" value="TAIR"/>
</dbReference>
<dbReference type="GO" id="GO:0009570">
    <property type="term" value="C:chloroplast stroma"/>
    <property type="evidence" value="ECO:0007005"/>
    <property type="project" value="TAIR"/>
</dbReference>
<dbReference type="GO" id="GO:0005739">
    <property type="term" value="C:mitochondrion"/>
    <property type="evidence" value="ECO:0000314"/>
    <property type="project" value="TAIR"/>
</dbReference>
<dbReference type="GO" id="GO:0005524">
    <property type="term" value="F:ATP binding"/>
    <property type="evidence" value="ECO:0007669"/>
    <property type="project" value="UniProtKB-KW"/>
</dbReference>
<dbReference type="GO" id="GO:0046872">
    <property type="term" value="F:metal ion binding"/>
    <property type="evidence" value="ECO:0007669"/>
    <property type="project" value="UniProtKB-KW"/>
</dbReference>
<dbReference type="GO" id="GO:0004829">
    <property type="term" value="F:threonine-tRNA ligase activity"/>
    <property type="evidence" value="ECO:0007669"/>
    <property type="project" value="UniProtKB-EC"/>
</dbReference>
<dbReference type="GO" id="GO:0009793">
    <property type="term" value="P:embryo development ending in seed dormancy"/>
    <property type="evidence" value="ECO:0000315"/>
    <property type="project" value="TAIR"/>
</dbReference>
<dbReference type="GO" id="GO:0006435">
    <property type="term" value="P:threonyl-tRNA aminoacylation"/>
    <property type="evidence" value="ECO:0007669"/>
    <property type="project" value="InterPro"/>
</dbReference>
<dbReference type="CDD" id="cd00860">
    <property type="entry name" value="ThrRS_anticodon"/>
    <property type="match status" value="1"/>
</dbReference>
<dbReference type="CDD" id="cd00771">
    <property type="entry name" value="ThrRS_core"/>
    <property type="match status" value="1"/>
</dbReference>
<dbReference type="FunFam" id="3.30.54.20:FF:000002">
    <property type="entry name" value="Threonine--tRNA ligase"/>
    <property type="match status" value="1"/>
</dbReference>
<dbReference type="FunFam" id="3.30.930.10:FF:000002">
    <property type="entry name" value="Threonine--tRNA ligase"/>
    <property type="match status" value="1"/>
</dbReference>
<dbReference type="FunFam" id="3.30.980.10:FF:000001">
    <property type="entry name" value="Threonine--tRNA ligase"/>
    <property type="match status" value="1"/>
</dbReference>
<dbReference type="FunFam" id="3.40.50.800:FF:000001">
    <property type="entry name" value="Threonine--tRNA ligase"/>
    <property type="match status" value="1"/>
</dbReference>
<dbReference type="Gene3D" id="3.30.54.20">
    <property type="match status" value="1"/>
</dbReference>
<dbReference type="Gene3D" id="3.40.50.800">
    <property type="entry name" value="Anticodon-binding domain"/>
    <property type="match status" value="1"/>
</dbReference>
<dbReference type="Gene3D" id="3.30.930.10">
    <property type="entry name" value="Bira Bifunctional Protein, Domain 2"/>
    <property type="match status" value="1"/>
</dbReference>
<dbReference type="Gene3D" id="3.30.980.10">
    <property type="entry name" value="Threonyl-trna Synthetase, Chain A, domain 2"/>
    <property type="match status" value="1"/>
</dbReference>
<dbReference type="HAMAP" id="MF_00184">
    <property type="entry name" value="Thr_tRNA_synth"/>
    <property type="match status" value="1"/>
</dbReference>
<dbReference type="InterPro" id="IPR002314">
    <property type="entry name" value="aa-tRNA-synt_IIb"/>
</dbReference>
<dbReference type="InterPro" id="IPR006195">
    <property type="entry name" value="aa-tRNA-synth_II"/>
</dbReference>
<dbReference type="InterPro" id="IPR045864">
    <property type="entry name" value="aa-tRNA-synth_II/BPL/LPL"/>
</dbReference>
<dbReference type="InterPro" id="IPR004154">
    <property type="entry name" value="Anticodon-bd"/>
</dbReference>
<dbReference type="InterPro" id="IPR036621">
    <property type="entry name" value="Anticodon-bd_dom_sf"/>
</dbReference>
<dbReference type="InterPro" id="IPR002320">
    <property type="entry name" value="Thr-tRNA-ligase_IIa"/>
</dbReference>
<dbReference type="InterPro" id="IPR018163">
    <property type="entry name" value="Thr/Ala-tRNA-synth_IIc_edit"/>
</dbReference>
<dbReference type="InterPro" id="IPR047246">
    <property type="entry name" value="ThrRS_anticodon"/>
</dbReference>
<dbReference type="InterPro" id="IPR033728">
    <property type="entry name" value="ThrRS_core"/>
</dbReference>
<dbReference type="InterPro" id="IPR012947">
    <property type="entry name" value="tRNA_SAD"/>
</dbReference>
<dbReference type="NCBIfam" id="TIGR00418">
    <property type="entry name" value="thrS"/>
    <property type="match status" value="1"/>
</dbReference>
<dbReference type="PANTHER" id="PTHR11451:SF44">
    <property type="entry name" value="THREONINE--TRNA LIGASE, CHLOROPLASTIC_MITOCHONDRIAL 2"/>
    <property type="match status" value="1"/>
</dbReference>
<dbReference type="PANTHER" id="PTHR11451">
    <property type="entry name" value="THREONINE-TRNA LIGASE"/>
    <property type="match status" value="1"/>
</dbReference>
<dbReference type="Pfam" id="PF03129">
    <property type="entry name" value="HGTP_anticodon"/>
    <property type="match status" value="1"/>
</dbReference>
<dbReference type="Pfam" id="PF00587">
    <property type="entry name" value="tRNA-synt_2b"/>
    <property type="match status" value="1"/>
</dbReference>
<dbReference type="Pfam" id="PF07973">
    <property type="entry name" value="tRNA_SAD"/>
    <property type="match status" value="1"/>
</dbReference>
<dbReference type="PRINTS" id="PR01047">
    <property type="entry name" value="TRNASYNTHTHR"/>
</dbReference>
<dbReference type="SMART" id="SM00863">
    <property type="entry name" value="tRNA_SAD"/>
    <property type="match status" value="1"/>
</dbReference>
<dbReference type="SUPFAM" id="SSF52954">
    <property type="entry name" value="Class II aaRS ABD-related"/>
    <property type="match status" value="1"/>
</dbReference>
<dbReference type="SUPFAM" id="SSF55681">
    <property type="entry name" value="Class II aaRS and biotin synthetases"/>
    <property type="match status" value="1"/>
</dbReference>
<dbReference type="SUPFAM" id="SSF55186">
    <property type="entry name" value="ThrRS/AlaRS common domain"/>
    <property type="match status" value="1"/>
</dbReference>
<dbReference type="PROSITE" id="PS50862">
    <property type="entry name" value="AA_TRNA_LIGASE_II"/>
    <property type="match status" value="1"/>
</dbReference>
<evidence type="ECO:0000250" key="1"/>
<evidence type="ECO:0000269" key="2">
    <source>
    </source>
</evidence>
<evidence type="ECO:0000303" key="3">
    <source>
    </source>
</evidence>
<evidence type="ECO:0000305" key="4"/>
<evidence type="ECO:0000305" key="5">
    <source>
    </source>
</evidence>
<evidence type="ECO:0000312" key="6">
    <source>
        <dbReference type="Araport" id="AT2G04842"/>
    </source>
</evidence>
<evidence type="ECO:0000312" key="7">
    <source>
        <dbReference type="EMBL" id="AC006955"/>
    </source>
</evidence>
<comment type="catalytic activity">
    <reaction evidence="4">
        <text>tRNA(Thr) + L-threonine + ATP = L-threonyl-tRNA(Thr) + AMP + diphosphate + H(+)</text>
        <dbReference type="Rhea" id="RHEA:24624"/>
        <dbReference type="Rhea" id="RHEA-COMP:9670"/>
        <dbReference type="Rhea" id="RHEA-COMP:9704"/>
        <dbReference type="ChEBI" id="CHEBI:15378"/>
        <dbReference type="ChEBI" id="CHEBI:30616"/>
        <dbReference type="ChEBI" id="CHEBI:33019"/>
        <dbReference type="ChEBI" id="CHEBI:57926"/>
        <dbReference type="ChEBI" id="CHEBI:78442"/>
        <dbReference type="ChEBI" id="CHEBI:78534"/>
        <dbReference type="ChEBI" id="CHEBI:456215"/>
        <dbReference type="EC" id="6.1.1.3"/>
    </reaction>
</comment>
<comment type="subcellular location">
    <subcellularLocation>
        <location evidence="2">Plastid</location>
        <location evidence="2">Chloroplast</location>
    </subcellularLocation>
    <subcellularLocation>
        <location evidence="2">Mitochondrion</location>
    </subcellularLocation>
</comment>
<comment type="disruption phenotype">
    <text evidence="5">Embryo defective. Developmental arrest of the embryo at the globular stage.</text>
</comment>
<comment type="similarity">
    <text evidence="4">Belongs to the class-II aminoacyl-tRNA synthetase family.</text>
</comment>
<comment type="sequence caution" evidence="4">
    <conflict type="frameshift">
        <sequence resource="EMBL-CDS" id="BAD94986"/>
    </conflict>
</comment>
<gene>
    <name evidence="3" type="primary">EMB2761</name>
    <name evidence="6" type="ordered locus">At2g04842</name>
    <name evidence="7" type="ORF">F28I8</name>
</gene>
<feature type="transit peptide" description="Chloroplast and mitochondrion" evidence="4">
    <location>
        <begin position="1"/>
        <end status="unknown"/>
    </location>
</feature>
<feature type="chain" id="PRO_0000433549" description="Threonine--tRNA ligase, chloroplastic/mitochondrial 2" evidence="4">
    <location>
        <begin status="unknown"/>
        <end position="650"/>
    </location>
</feature>
<feature type="binding site" evidence="1">
    <location>
        <position position="347"/>
    </location>
    <ligand>
        <name>Zn(2+)</name>
        <dbReference type="ChEBI" id="CHEBI:29105"/>
        <note>catalytic</note>
    </ligand>
</feature>
<feature type="binding site" evidence="1">
    <location>
        <position position="398"/>
    </location>
    <ligand>
        <name>Zn(2+)</name>
        <dbReference type="ChEBI" id="CHEBI:29105"/>
        <note>catalytic</note>
    </ligand>
</feature>
<feature type="binding site" evidence="1">
    <location>
        <position position="524"/>
    </location>
    <ligand>
        <name>Zn(2+)</name>
        <dbReference type="ChEBI" id="CHEBI:29105"/>
        <note>catalytic</note>
    </ligand>
</feature>
<feature type="sequence conflict" description="In Ref. 3; BAD94986." evidence="4" ref="3">
    <original>K</original>
    <variation>R</variation>
    <location>
        <position position="461"/>
    </location>
</feature>